<name>CDC50_TOXGG</name>
<comment type="function">
    <text evidence="4">In tachyzoites, required for the cellular trafficking of guanylate cyclase GC and UGO to the cell membrane (PubMed:30742070). May play a role in the folding of the GC P-type ATPase-like domain to sense vacuolar changes in phosphatidic acid and pH levels which trigger parasite egress (PubMed:30742070).</text>
</comment>
<comment type="subunit">
    <text evidence="4">Interacts with GC; the interaction regulates guanylate cyclase GC trafficking and sensing environmental changes.</text>
</comment>
<comment type="subcellular location">
    <subcellularLocation>
        <location evidence="7">Membrane</location>
        <topology evidence="1">Multi-pass membrane protein</topology>
    </subcellularLocation>
    <text evidence="4">In intracellular tachyzoites, localizes to the apical cap, to the cytoplasm in disperse foci and to the residual body.</text>
</comment>
<comment type="disruption phenotype">
    <text evidence="4">Conditional knockout in tachyzoites severely impairs lytic parasite growth in host cells without affecting intracellular replication (PubMed:30742070). Loss of egress from host cells; however, tachyzoite motility and host cell invasion are normal (PubMed:30742070). Guanylate cyclase GC is unstable and, together with UGO, remains trapped along the secretory pathway (PubMed:30742070). Loss of microneme secretion in response to phosphatidic acid or a decrease in vacuolar pH (PubMed:30742070).</text>
</comment>
<comment type="similarity">
    <text evidence="6">Belongs to the CDC50/LEM3 family.</text>
</comment>
<keyword id="KW-0325">Glycoprotein</keyword>
<keyword id="KW-0472">Membrane</keyword>
<keyword id="KW-0812">Transmembrane</keyword>
<keyword id="KW-1133">Transmembrane helix</keyword>
<reference evidence="9" key="1">
    <citation type="submission" date="2013-05" db="EMBL/GenBank/DDBJ databases">
        <authorList>
            <person name="Sibley D."/>
            <person name="Venepally P."/>
            <person name="Karamycheva S."/>
            <person name="Hadjithomas M."/>
            <person name="Khan A."/>
            <person name="Brunk B."/>
            <person name="Roos D."/>
            <person name="Caler E."/>
            <person name="Lorenzi H."/>
        </authorList>
    </citation>
    <scope>NUCLEOTIDE SEQUENCE [LARGE SCALE GENOMIC DNA]</scope>
    <source>
        <strain evidence="9">ATCC 50853 / GT1</strain>
    </source>
</reference>
<reference evidence="6" key="2">
    <citation type="journal article" date="2019" name="Nat. Microbiol.">
        <title>Phosphatidic acid governs natural egress in Toxoplasma gondii via a guanylate cyclase receptor platform.</title>
        <authorList>
            <person name="Bisio H."/>
            <person name="Lunghi M."/>
            <person name="Brochet M."/>
            <person name="Soldati-Favre D."/>
        </authorList>
    </citation>
    <scope>FUNCTION</scope>
    <scope>INTERACTION WITH GC</scope>
    <scope>SUBCELLULAR LOCATION</scope>
    <scope>DISRUPTION PHENOTYPE</scope>
</reference>
<dbReference type="EMBL" id="AAQM03000026">
    <property type="protein sequence ID" value="EPR64123.1"/>
    <property type="molecule type" value="Genomic_DNA"/>
</dbReference>
<dbReference type="GlyCosmos" id="S7WII9">
    <property type="glycosylation" value="2 sites, No reported glycans"/>
</dbReference>
<dbReference type="EnsemblProtists" id="EPR64123">
    <property type="protein sequence ID" value="EPR64123"/>
    <property type="gene ID" value="TGGT1_230820"/>
</dbReference>
<dbReference type="VEuPathDB" id="ToxoDB:TGGT1_230820"/>
<dbReference type="Proteomes" id="UP000005641">
    <property type="component" value="Unassembled WGS sequence"/>
</dbReference>
<dbReference type="GO" id="GO:0016324">
    <property type="term" value="C:apical plasma membrane"/>
    <property type="evidence" value="ECO:0000314"/>
    <property type="project" value="UniProtKB"/>
</dbReference>
<dbReference type="GO" id="GO:0005783">
    <property type="term" value="C:endoplasmic reticulum"/>
    <property type="evidence" value="ECO:0007669"/>
    <property type="project" value="TreeGrafter"/>
</dbReference>
<dbReference type="GO" id="GO:0005794">
    <property type="term" value="C:Golgi apparatus"/>
    <property type="evidence" value="ECO:0007669"/>
    <property type="project" value="TreeGrafter"/>
</dbReference>
<dbReference type="GO" id="GO:0072659">
    <property type="term" value="P:protein localization to plasma membrane"/>
    <property type="evidence" value="ECO:0000315"/>
    <property type="project" value="UniProtKB"/>
</dbReference>
<dbReference type="InterPro" id="IPR005045">
    <property type="entry name" value="CDC50/LEM3_fam"/>
</dbReference>
<dbReference type="PANTHER" id="PTHR10926:SF0">
    <property type="entry name" value="CDC50, ISOFORM A"/>
    <property type="match status" value="1"/>
</dbReference>
<dbReference type="PANTHER" id="PTHR10926">
    <property type="entry name" value="CELL CYCLE CONTROL PROTEIN 50"/>
    <property type="match status" value="1"/>
</dbReference>
<dbReference type="Pfam" id="PF03381">
    <property type="entry name" value="CDC50"/>
    <property type="match status" value="1"/>
</dbReference>
<proteinExistence type="evidence at protein level"/>
<gene>
    <name evidence="5" type="primary">CDC50.1</name>
    <name evidence="8" type="ORF">TGGT1_230820</name>
</gene>
<organism evidence="9">
    <name type="scientific">Toxoplasma gondii (strain ATCC 50853 / GT1)</name>
    <dbReference type="NCBI Taxonomy" id="507601"/>
    <lineage>
        <taxon>Eukaryota</taxon>
        <taxon>Sar</taxon>
        <taxon>Alveolata</taxon>
        <taxon>Apicomplexa</taxon>
        <taxon>Conoidasida</taxon>
        <taxon>Coccidia</taxon>
        <taxon>Eucoccidiorida</taxon>
        <taxon>Eimeriorina</taxon>
        <taxon>Sarcocystidae</taxon>
        <taxon>Toxoplasma</taxon>
    </lineage>
</organism>
<feature type="chain" id="PRO_0000452809" description="CDC50-related protein CDC50.1">
    <location>
        <begin position="1"/>
        <end position="524"/>
    </location>
</feature>
<feature type="topological domain" description="Cytoplasmic" evidence="6">
    <location>
        <begin position="1"/>
        <end position="181"/>
    </location>
</feature>
<feature type="transmembrane region" description="Helical" evidence="1">
    <location>
        <begin position="182"/>
        <end position="202"/>
    </location>
</feature>
<feature type="topological domain" description="Extracellular" evidence="6">
    <location>
        <begin position="203"/>
        <end position="473"/>
    </location>
</feature>
<feature type="transmembrane region" description="Helical" evidence="1">
    <location>
        <begin position="474"/>
        <end position="494"/>
    </location>
</feature>
<feature type="topological domain" description="Cytoplasmic" evidence="6">
    <location>
        <begin position="495"/>
        <end position="524"/>
    </location>
</feature>
<feature type="region of interest" description="Disordered" evidence="3">
    <location>
        <begin position="1"/>
        <end position="40"/>
    </location>
</feature>
<feature type="region of interest" description="Disordered" evidence="3">
    <location>
        <begin position="52"/>
        <end position="86"/>
    </location>
</feature>
<feature type="compositionally biased region" description="Polar residues" evidence="3">
    <location>
        <begin position="1"/>
        <end position="19"/>
    </location>
</feature>
<feature type="compositionally biased region" description="Polar residues" evidence="3">
    <location>
        <begin position="26"/>
        <end position="39"/>
    </location>
</feature>
<feature type="compositionally biased region" description="Low complexity" evidence="3">
    <location>
        <begin position="67"/>
        <end position="80"/>
    </location>
</feature>
<feature type="glycosylation site" description="N-linked (GlcNAc...) asparagine" evidence="2">
    <location>
        <position position="297"/>
    </location>
</feature>
<feature type="glycosylation site" description="N-linked (GlcNAc...) asparagine" evidence="2">
    <location>
        <position position="339"/>
    </location>
</feature>
<evidence type="ECO:0000255" key="1"/>
<evidence type="ECO:0000255" key="2">
    <source>
        <dbReference type="PROSITE-ProRule" id="PRU00498"/>
    </source>
</evidence>
<evidence type="ECO:0000256" key="3">
    <source>
        <dbReference type="SAM" id="MobiDB-lite"/>
    </source>
</evidence>
<evidence type="ECO:0000269" key="4">
    <source>
    </source>
</evidence>
<evidence type="ECO:0000303" key="5">
    <source>
    </source>
</evidence>
<evidence type="ECO:0000305" key="6"/>
<evidence type="ECO:0000305" key="7">
    <source>
    </source>
</evidence>
<evidence type="ECO:0000312" key="8">
    <source>
        <dbReference type="EMBL" id="EPR64123.1"/>
    </source>
</evidence>
<evidence type="ECO:0000312" key="9">
    <source>
        <dbReference type="Proteomes" id="UP000005641"/>
    </source>
</evidence>
<protein>
    <recommendedName>
        <fullName evidence="5">CDC50-related protein CDC50.1</fullName>
    </recommendedName>
</protein>
<accession>S7WII9</accession>
<sequence length="524" mass="58191">MGENSTTGLRGQADVSQFSDAAVEPTLSSPPTGQRQQSLPLFGEETCSISSAPSVGGGGGWPFQRQGSSRLTSRGTSLSSCSDAGSGLGALRQREDSFPEYHGVGLPLGGKYALDGTGLVLAPRVPFIFSHQLPSLTGLDEAGFSDTRKVPSTYQALAARFVHQVHQEAGNGMYPLWSAGVVLRLCLLGALFFVSVGAWLIFEDEQHVECKLNYAEKTLQEGSSRYLLKGISSAHCTREVNELKGEEISVYAEMGHFFQNDAQVLWSRNDRQLAGKIFTDPKDVRECEPLATAVVGNVTKVLHPCGALAWAVFTDKYQFLEGTPEGDNDQVPMKPIPLNQTQAVLLHSWPWQDMYKNPPAEDRAAVLDKVYFWMSPVDNDDGEDMYKTREEARAELLMDRLNYEEAGEMVENGHFIQWMQTAALGTFRKLYGSLEGPLKLPVSAHITVMYDVSSWKGKKAIVLVQKSRLGGRSLFIGIAYLSFGCLLTMLVFYMLWKKWQYRREGEEIRDLRWQTKTRGSKKTK</sequence>